<keyword id="KW-0963">Cytoplasm</keyword>
<keyword id="KW-0378">Hydrolase</keyword>
<keyword id="KW-0546">Nucleotide metabolism</keyword>
<protein>
    <recommendedName>
        <fullName evidence="1">dTTP/UTP pyrophosphatase</fullName>
        <shortName evidence="1">dTTPase/UTPase</shortName>
        <ecNumber evidence="1">3.6.1.9</ecNumber>
    </recommendedName>
    <alternativeName>
        <fullName evidence="1">Nucleoside triphosphate pyrophosphatase</fullName>
    </alternativeName>
    <alternativeName>
        <fullName evidence="1">Nucleotide pyrophosphatase</fullName>
        <shortName evidence="1">Nucleotide PPase</shortName>
    </alternativeName>
</protein>
<reference key="1">
    <citation type="journal article" date="2009" name="Proc. Natl. Acad. Sci. U.S.A.">
        <title>Characterizing a model human gut microbiota composed of members of its two dominant bacterial phyla.</title>
        <authorList>
            <person name="Mahowald M.A."/>
            <person name="Rey F.E."/>
            <person name="Seedorf H."/>
            <person name="Turnbaugh P.J."/>
            <person name="Fulton R.S."/>
            <person name="Wollam A."/>
            <person name="Shah N."/>
            <person name="Wang C."/>
            <person name="Magrini V."/>
            <person name="Wilson R.K."/>
            <person name="Cantarel B.L."/>
            <person name="Coutinho P.M."/>
            <person name="Henrissat B."/>
            <person name="Crock L.W."/>
            <person name="Russell A."/>
            <person name="Verberkmoes N.C."/>
            <person name="Hettich R.L."/>
            <person name="Gordon J.I."/>
        </authorList>
    </citation>
    <scope>NUCLEOTIDE SEQUENCE [LARGE SCALE GENOMIC DNA]</scope>
    <source>
        <strain>ATCC 33656 / DSM 3377 / JCM 17463 / KCTC 5835 / LMG 30912 / VPI 0990</strain>
    </source>
</reference>
<comment type="function">
    <text evidence="1">Nucleoside triphosphate pyrophosphatase that hydrolyzes dTTP and UTP. May have a dual role in cell division arrest and in preventing the incorporation of modified nucleotides into cellular nucleic acids.</text>
</comment>
<comment type="catalytic activity">
    <reaction evidence="1">
        <text>dTTP + H2O = dTMP + diphosphate + H(+)</text>
        <dbReference type="Rhea" id="RHEA:28534"/>
        <dbReference type="ChEBI" id="CHEBI:15377"/>
        <dbReference type="ChEBI" id="CHEBI:15378"/>
        <dbReference type="ChEBI" id="CHEBI:33019"/>
        <dbReference type="ChEBI" id="CHEBI:37568"/>
        <dbReference type="ChEBI" id="CHEBI:63528"/>
        <dbReference type="EC" id="3.6.1.9"/>
    </reaction>
</comment>
<comment type="catalytic activity">
    <reaction evidence="1">
        <text>UTP + H2O = UMP + diphosphate + H(+)</text>
        <dbReference type="Rhea" id="RHEA:29395"/>
        <dbReference type="ChEBI" id="CHEBI:15377"/>
        <dbReference type="ChEBI" id="CHEBI:15378"/>
        <dbReference type="ChEBI" id="CHEBI:33019"/>
        <dbReference type="ChEBI" id="CHEBI:46398"/>
        <dbReference type="ChEBI" id="CHEBI:57865"/>
        <dbReference type="EC" id="3.6.1.9"/>
    </reaction>
</comment>
<comment type="cofactor">
    <cofactor evidence="1">
        <name>a divalent metal cation</name>
        <dbReference type="ChEBI" id="CHEBI:60240"/>
    </cofactor>
</comment>
<comment type="subcellular location">
    <subcellularLocation>
        <location evidence="1">Cytoplasm</location>
    </subcellularLocation>
</comment>
<comment type="similarity">
    <text evidence="1">Belongs to the Maf family. YhdE subfamily.</text>
</comment>
<dbReference type="EC" id="3.6.1.9" evidence="1"/>
<dbReference type="EMBL" id="CP001107">
    <property type="protein sequence ID" value="ACR77016.1"/>
    <property type="molecule type" value="Genomic_DNA"/>
</dbReference>
<dbReference type="RefSeq" id="WP_012744043.1">
    <property type="nucleotide sequence ID" value="NC_012781.1"/>
</dbReference>
<dbReference type="SMR" id="C4ZDP0"/>
<dbReference type="STRING" id="515619.EUBREC_3290"/>
<dbReference type="PaxDb" id="515619-EUBREC_3290"/>
<dbReference type="KEGG" id="ere:EUBREC_3290"/>
<dbReference type="HOGENOM" id="CLU_040416_0_0_9"/>
<dbReference type="Proteomes" id="UP000001477">
    <property type="component" value="Chromosome"/>
</dbReference>
<dbReference type="GO" id="GO:0005737">
    <property type="term" value="C:cytoplasm"/>
    <property type="evidence" value="ECO:0007669"/>
    <property type="project" value="UniProtKB-SubCell"/>
</dbReference>
<dbReference type="GO" id="GO:0036218">
    <property type="term" value="F:dTTP diphosphatase activity"/>
    <property type="evidence" value="ECO:0007669"/>
    <property type="project" value="RHEA"/>
</dbReference>
<dbReference type="GO" id="GO:0036221">
    <property type="term" value="F:UTP diphosphatase activity"/>
    <property type="evidence" value="ECO:0007669"/>
    <property type="project" value="RHEA"/>
</dbReference>
<dbReference type="GO" id="GO:0009117">
    <property type="term" value="P:nucleotide metabolic process"/>
    <property type="evidence" value="ECO:0007669"/>
    <property type="project" value="UniProtKB-KW"/>
</dbReference>
<dbReference type="CDD" id="cd00555">
    <property type="entry name" value="Maf"/>
    <property type="match status" value="1"/>
</dbReference>
<dbReference type="Gene3D" id="3.90.950.10">
    <property type="match status" value="1"/>
</dbReference>
<dbReference type="HAMAP" id="MF_00528">
    <property type="entry name" value="Maf"/>
    <property type="match status" value="1"/>
</dbReference>
<dbReference type="InterPro" id="IPR029001">
    <property type="entry name" value="ITPase-like_fam"/>
</dbReference>
<dbReference type="InterPro" id="IPR003697">
    <property type="entry name" value="Maf-like"/>
</dbReference>
<dbReference type="NCBIfam" id="TIGR00172">
    <property type="entry name" value="maf"/>
    <property type="match status" value="1"/>
</dbReference>
<dbReference type="PANTHER" id="PTHR43213">
    <property type="entry name" value="BIFUNCTIONAL DTTP/UTP PYROPHOSPHATASE/METHYLTRANSFERASE PROTEIN-RELATED"/>
    <property type="match status" value="1"/>
</dbReference>
<dbReference type="PANTHER" id="PTHR43213:SF5">
    <property type="entry name" value="BIFUNCTIONAL DTTP_UTP PYROPHOSPHATASE_METHYLTRANSFERASE PROTEIN-RELATED"/>
    <property type="match status" value="1"/>
</dbReference>
<dbReference type="Pfam" id="PF02545">
    <property type="entry name" value="Maf"/>
    <property type="match status" value="1"/>
</dbReference>
<dbReference type="PIRSF" id="PIRSF006305">
    <property type="entry name" value="Maf"/>
    <property type="match status" value="1"/>
</dbReference>
<dbReference type="SUPFAM" id="SSF52972">
    <property type="entry name" value="ITPase-like"/>
    <property type="match status" value="1"/>
</dbReference>
<evidence type="ECO:0000255" key="1">
    <source>
        <dbReference type="HAMAP-Rule" id="MF_00528"/>
    </source>
</evidence>
<gene>
    <name type="ordered locus">EUBREC_3290</name>
</gene>
<organism>
    <name type="scientific">Agathobacter rectalis (strain ATCC 33656 / DSM 3377 / JCM 17463 / KCTC 5835 / VPI 0990)</name>
    <name type="common">Eubacterium rectale</name>
    <dbReference type="NCBI Taxonomy" id="515619"/>
    <lineage>
        <taxon>Bacteria</taxon>
        <taxon>Bacillati</taxon>
        <taxon>Bacillota</taxon>
        <taxon>Clostridia</taxon>
        <taxon>Lachnospirales</taxon>
        <taxon>Lachnospiraceae</taxon>
        <taxon>Agathobacter</taxon>
    </lineage>
</organism>
<proteinExistence type="inferred from homology"/>
<feature type="chain" id="PRO_1000211769" description="dTTP/UTP pyrophosphatase">
    <location>
        <begin position="1"/>
        <end position="205"/>
    </location>
</feature>
<feature type="active site" description="Proton acceptor" evidence="1">
    <location>
        <position position="81"/>
    </location>
</feature>
<feature type="site" description="Important for substrate specificity" evidence="1">
    <location>
        <position position="12"/>
    </location>
</feature>
<feature type="site" description="Important for substrate specificity" evidence="1">
    <location>
        <position position="82"/>
    </location>
</feature>
<feature type="site" description="Important for substrate specificity" evidence="1">
    <location>
        <position position="169"/>
    </location>
</feature>
<accession>C4ZDP0</accession>
<sequence>MSQIILASASPRRKELLEQIGAEFVVCPAKGEEIITEEEPSAVVMELSRQKAEEVASGVLTYNEQHAELVTPQDILVIGADTVVAYENQILGKPKDEEDARRMLSMLSGKTHSVYTGVTFVFIDKAGRTGEHCFYEKTDVSMYKLTEEEIDRYISSGDPMDKAGSYGIQGRFAIHIKGIHGDYNNVVGLPVARLYQELRKLGVDV</sequence>
<name>NTPPA_AGARV</name>